<dbReference type="EMBL" id="AF055136">
    <property type="protein sequence ID" value="AAC26019.1"/>
    <property type="molecule type" value="Genomic_DNA"/>
</dbReference>
<dbReference type="EMBL" id="AF055114">
    <property type="protein sequence ID" value="AAC26019.1"/>
    <property type="status" value="JOINED"/>
    <property type="molecule type" value="Genomic_DNA"/>
</dbReference>
<dbReference type="EMBL" id="AF055115">
    <property type="protein sequence ID" value="AAC26019.1"/>
    <property type="status" value="JOINED"/>
    <property type="molecule type" value="Genomic_DNA"/>
</dbReference>
<dbReference type="EMBL" id="AF055116">
    <property type="protein sequence ID" value="AAC26019.1"/>
    <property type="status" value="JOINED"/>
    <property type="molecule type" value="Genomic_DNA"/>
</dbReference>
<dbReference type="EMBL" id="AF055117">
    <property type="protein sequence ID" value="AAC26019.1"/>
    <property type="status" value="JOINED"/>
    <property type="molecule type" value="Genomic_DNA"/>
</dbReference>
<dbReference type="EMBL" id="AF055118">
    <property type="protein sequence ID" value="AAC26019.1"/>
    <property type="status" value="JOINED"/>
    <property type="molecule type" value="Genomic_DNA"/>
</dbReference>
<dbReference type="EMBL" id="AF055119">
    <property type="protein sequence ID" value="AAC26019.1"/>
    <property type="status" value="JOINED"/>
    <property type="molecule type" value="Genomic_DNA"/>
</dbReference>
<dbReference type="EMBL" id="AF055120">
    <property type="protein sequence ID" value="AAC26019.1"/>
    <property type="status" value="JOINED"/>
    <property type="molecule type" value="Genomic_DNA"/>
</dbReference>
<dbReference type="EMBL" id="AF055121">
    <property type="protein sequence ID" value="AAC26019.1"/>
    <property type="status" value="JOINED"/>
    <property type="molecule type" value="Genomic_DNA"/>
</dbReference>
<dbReference type="EMBL" id="AF055122">
    <property type="protein sequence ID" value="AAC26019.1"/>
    <property type="status" value="JOINED"/>
    <property type="molecule type" value="Genomic_DNA"/>
</dbReference>
<dbReference type="EMBL" id="AF055123">
    <property type="protein sequence ID" value="AAC26019.1"/>
    <property type="status" value="JOINED"/>
    <property type="molecule type" value="Genomic_DNA"/>
</dbReference>
<dbReference type="EMBL" id="AF055124">
    <property type="protein sequence ID" value="AAC26019.1"/>
    <property type="status" value="JOINED"/>
    <property type="molecule type" value="Genomic_DNA"/>
</dbReference>
<dbReference type="EMBL" id="AF055125">
    <property type="protein sequence ID" value="AAC26019.1"/>
    <property type="status" value="JOINED"/>
    <property type="molecule type" value="Genomic_DNA"/>
</dbReference>
<dbReference type="EMBL" id="AF055126">
    <property type="protein sequence ID" value="AAC26019.1"/>
    <property type="status" value="JOINED"/>
    <property type="molecule type" value="Genomic_DNA"/>
</dbReference>
<dbReference type="EMBL" id="AF055127">
    <property type="protein sequence ID" value="AAC26019.1"/>
    <property type="status" value="JOINED"/>
    <property type="molecule type" value="Genomic_DNA"/>
</dbReference>
<dbReference type="EMBL" id="AF055128">
    <property type="protein sequence ID" value="AAC26019.1"/>
    <property type="status" value="JOINED"/>
    <property type="molecule type" value="Genomic_DNA"/>
</dbReference>
<dbReference type="EMBL" id="AF055129">
    <property type="protein sequence ID" value="AAC26019.1"/>
    <property type="status" value="JOINED"/>
    <property type="molecule type" value="Genomic_DNA"/>
</dbReference>
<dbReference type="EMBL" id="AF055130">
    <property type="protein sequence ID" value="AAC26019.1"/>
    <property type="status" value="JOINED"/>
    <property type="molecule type" value="Genomic_DNA"/>
</dbReference>
<dbReference type="EMBL" id="AF055131">
    <property type="protein sequence ID" value="AAC26019.1"/>
    <property type="status" value="JOINED"/>
    <property type="molecule type" value="Genomic_DNA"/>
</dbReference>
<dbReference type="EMBL" id="AF055132">
    <property type="protein sequence ID" value="AAC26019.1"/>
    <property type="status" value="JOINED"/>
    <property type="molecule type" value="Genomic_DNA"/>
</dbReference>
<dbReference type="EMBL" id="AF055133">
    <property type="protein sequence ID" value="AAC26019.1"/>
    <property type="status" value="JOINED"/>
    <property type="molecule type" value="Genomic_DNA"/>
</dbReference>
<dbReference type="EMBL" id="AF055134">
    <property type="protein sequence ID" value="AAC26019.1"/>
    <property type="status" value="JOINED"/>
    <property type="molecule type" value="Genomic_DNA"/>
</dbReference>
<dbReference type="EMBL" id="AF055135">
    <property type="protein sequence ID" value="AAC26019.1"/>
    <property type="status" value="JOINED"/>
    <property type="molecule type" value="Genomic_DNA"/>
</dbReference>
<dbReference type="EMBL" id="AP000646">
    <property type="status" value="NOT_ANNOTATED_CDS"/>
    <property type="molecule type" value="Genomic_DNA"/>
</dbReference>
<dbReference type="EMBL" id="AP000826">
    <property type="status" value="NOT_ANNOTATED_CDS"/>
    <property type="molecule type" value="Genomic_DNA"/>
</dbReference>
<dbReference type="CCDS" id="CCDS8434.1"/>
<dbReference type="RefSeq" id="NP_005413.2">
    <property type="nucleotide sequence ID" value="NM_005422.4"/>
</dbReference>
<dbReference type="SMR" id="O75443"/>
<dbReference type="BioGRID" id="112866">
    <property type="interactions" value="8"/>
</dbReference>
<dbReference type="FunCoup" id="O75443">
    <property type="interactions" value="51"/>
</dbReference>
<dbReference type="IntAct" id="O75443">
    <property type="interactions" value="5"/>
</dbReference>
<dbReference type="MINT" id="O75443"/>
<dbReference type="STRING" id="9606.ENSP00000376543"/>
<dbReference type="TCDB" id="9.B.87.1.35">
    <property type="family name" value="the selenoprotein p receptor (selp-receptor) family"/>
</dbReference>
<dbReference type="GlyCosmos" id="O75443">
    <property type="glycosylation" value="30 sites, No reported glycans"/>
</dbReference>
<dbReference type="GlyGen" id="O75443">
    <property type="glycosylation" value="31 sites"/>
</dbReference>
<dbReference type="iPTMnet" id="O75443"/>
<dbReference type="PhosphoSitePlus" id="O75443"/>
<dbReference type="BioMuta" id="TECTA"/>
<dbReference type="jPOST" id="O75443"/>
<dbReference type="MassIVE" id="O75443"/>
<dbReference type="PaxDb" id="9606-ENSP00000376543"/>
<dbReference type="PeptideAtlas" id="O75443"/>
<dbReference type="ProteomicsDB" id="50008"/>
<dbReference type="Antibodypedia" id="18890">
    <property type="antibodies" value="32 antibodies from 14 providers"/>
</dbReference>
<dbReference type="DNASU" id="7007"/>
<dbReference type="Ensembl" id="ENST00000264037.2">
    <property type="protein sequence ID" value="ENSP00000264037.2"/>
    <property type="gene ID" value="ENSG00000109927.11"/>
</dbReference>
<dbReference type="Ensembl" id="ENST00000392793.6">
    <property type="protein sequence ID" value="ENSP00000376543.1"/>
    <property type="gene ID" value="ENSG00000109927.11"/>
</dbReference>
<dbReference type="GeneID" id="7007"/>
<dbReference type="KEGG" id="hsa:7007"/>
<dbReference type="MANE-Select" id="ENST00000392793.6">
    <property type="protein sequence ID" value="ENSP00000376543.1"/>
    <property type="RefSeq nucleotide sequence ID" value="NM_005422.4"/>
    <property type="RefSeq protein sequence ID" value="NP_005413.2"/>
</dbReference>
<dbReference type="UCSC" id="uc010rzo.2">
    <property type="organism name" value="human"/>
</dbReference>
<dbReference type="AGR" id="HGNC:11720"/>
<dbReference type="CTD" id="7007"/>
<dbReference type="DisGeNET" id="7007"/>
<dbReference type="GeneCards" id="TECTA"/>
<dbReference type="GeneReviews" id="TECTA"/>
<dbReference type="HGNC" id="HGNC:11720">
    <property type="gene designation" value="TECTA"/>
</dbReference>
<dbReference type="HPA" id="ENSG00000109927">
    <property type="expression patterns" value="Low tissue specificity"/>
</dbReference>
<dbReference type="MalaCards" id="TECTA"/>
<dbReference type="MIM" id="601543">
    <property type="type" value="phenotype"/>
</dbReference>
<dbReference type="MIM" id="602574">
    <property type="type" value="gene"/>
</dbReference>
<dbReference type="MIM" id="603629">
    <property type="type" value="phenotype"/>
</dbReference>
<dbReference type="neXtProt" id="NX_O75443"/>
<dbReference type="OpenTargets" id="ENSG00000109927"/>
<dbReference type="Orphanet" id="90635">
    <property type="disease" value="Rare autosomal dominant non-syndromic sensorineural deafness type DFNA"/>
</dbReference>
<dbReference type="Orphanet" id="90636">
    <property type="disease" value="Rare autosomal recessive non-syndromic sensorineural deafness type DFNB"/>
</dbReference>
<dbReference type="VEuPathDB" id="HostDB:ENSG00000109927"/>
<dbReference type="eggNOG" id="KOG1216">
    <property type="taxonomic scope" value="Eukaryota"/>
</dbReference>
<dbReference type="eggNOG" id="KOG4291">
    <property type="taxonomic scope" value="Eukaryota"/>
</dbReference>
<dbReference type="GeneTree" id="ENSGT00950000183155"/>
<dbReference type="HOGENOM" id="CLU_001423_0_0_1"/>
<dbReference type="InParanoid" id="O75443"/>
<dbReference type="OMA" id="RVQTGCV"/>
<dbReference type="OrthoDB" id="5273213at2759"/>
<dbReference type="PAN-GO" id="O75443">
    <property type="GO annotations" value="2 GO annotations based on evolutionary models"/>
</dbReference>
<dbReference type="PhylomeDB" id="O75443"/>
<dbReference type="TreeFam" id="TF300299"/>
<dbReference type="PathwayCommons" id="O75443"/>
<dbReference type="Reactome" id="R-HSA-163125">
    <property type="pathway name" value="Post-translational modification: synthesis of GPI-anchored proteins"/>
</dbReference>
<dbReference type="SignaLink" id="O75443"/>
<dbReference type="BioGRID-ORCS" id="7007">
    <property type="hits" value="5 hits in 1145 CRISPR screens"/>
</dbReference>
<dbReference type="ChiTaRS" id="TECTA">
    <property type="organism name" value="human"/>
</dbReference>
<dbReference type="GeneWiki" id="TECTA"/>
<dbReference type="GenomeRNAi" id="7007"/>
<dbReference type="Pharos" id="O75443">
    <property type="development level" value="Tbio"/>
</dbReference>
<dbReference type="PRO" id="PR:O75443"/>
<dbReference type="Proteomes" id="UP000005640">
    <property type="component" value="Chromosome 11"/>
</dbReference>
<dbReference type="RNAct" id="O75443">
    <property type="molecule type" value="protein"/>
</dbReference>
<dbReference type="Bgee" id="ENSG00000109927">
    <property type="expression patterns" value="Expressed in oocyte and 132 other cell types or tissues"/>
</dbReference>
<dbReference type="ExpressionAtlas" id="O75443">
    <property type="expression patterns" value="baseline and differential"/>
</dbReference>
<dbReference type="GO" id="GO:0070062">
    <property type="term" value="C:extracellular exosome"/>
    <property type="evidence" value="ECO:0007005"/>
    <property type="project" value="UniProtKB"/>
</dbReference>
<dbReference type="GO" id="GO:0031012">
    <property type="term" value="C:extracellular matrix"/>
    <property type="evidence" value="ECO:0000318"/>
    <property type="project" value="GO_Central"/>
</dbReference>
<dbReference type="GO" id="GO:0005576">
    <property type="term" value="C:extracellular region"/>
    <property type="evidence" value="ECO:0000304"/>
    <property type="project" value="Reactome"/>
</dbReference>
<dbReference type="GO" id="GO:0005886">
    <property type="term" value="C:plasma membrane"/>
    <property type="evidence" value="ECO:0000304"/>
    <property type="project" value="Reactome"/>
</dbReference>
<dbReference type="GO" id="GO:0098552">
    <property type="term" value="C:side of membrane"/>
    <property type="evidence" value="ECO:0007669"/>
    <property type="project" value="UniProtKB-KW"/>
</dbReference>
<dbReference type="GO" id="GO:0005201">
    <property type="term" value="F:extracellular matrix structural constituent"/>
    <property type="evidence" value="ECO:0000318"/>
    <property type="project" value="GO_Central"/>
</dbReference>
<dbReference type="GO" id="GO:0060088">
    <property type="term" value="P:auditory receptor cell stereocilium organization"/>
    <property type="evidence" value="ECO:0007669"/>
    <property type="project" value="Ensembl"/>
</dbReference>
<dbReference type="GO" id="GO:0007160">
    <property type="term" value="P:cell-matrix adhesion"/>
    <property type="evidence" value="ECO:0007669"/>
    <property type="project" value="InterPro"/>
</dbReference>
<dbReference type="GO" id="GO:0007605">
    <property type="term" value="P:sensory perception of sound"/>
    <property type="evidence" value="ECO:0000304"/>
    <property type="project" value="ProtInc"/>
</dbReference>
<dbReference type="CDD" id="cd19941">
    <property type="entry name" value="TIL"/>
    <property type="match status" value="3"/>
</dbReference>
<dbReference type="FunFam" id="2.10.25.10:FF:000055">
    <property type="entry name" value="alpha-tectorin isoform X1"/>
    <property type="match status" value="3"/>
</dbReference>
<dbReference type="FunFam" id="2.10.25.10:FF:000451">
    <property type="entry name" value="alpha-tectorin isoform X1"/>
    <property type="match status" value="1"/>
</dbReference>
<dbReference type="FunFam" id="2.60.40.4100:FF:000001">
    <property type="entry name" value="alpha-tectorin isoform X1"/>
    <property type="match status" value="1"/>
</dbReference>
<dbReference type="FunFam" id="2.60.40.3210:FF:000002">
    <property type="entry name" value="Tectorin alpha"/>
    <property type="match status" value="1"/>
</dbReference>
<dbReference type="Gene3D" id="2.10.25.10">
    <property type="entry name" value="Laminin"/>
    <property type="match status" value="4"/>
</dbReference>
<dbReference type="Gene3D" id="2.60.40.4100">
    <property type="entry name" value="Zona pellucida, ZP-C domain"/>
    <property type="match status" value="1"/>
</dbReference>
<dbReference type="Gene3D" id="2.60.40.3210">
    <property type="entry name" value="Zona pellucida, ZP-N domain"/>
    <property type="match status" value="1"/>
</dbReference>
<dbReference type="InterPro" id="IPR052749">
    <property type="entry name" value="Alpha-tectorin"/>
</dbReference>
<dbReference type="InterPro" id="IPR000742">
    <property type="entry name" value="EGF-like_dom"/>
</dbReference>
<dbReference type="InterPro" id="IPR003886">
    <property type="entry name" value="NIDO_dom"/>
</dbReference>
<dbReference type="InterPro" id="IPR036084">
    <property type="entry name" value="Ser_inhib-like_sf"/>
</dbReference>
<dbReference type="InterPro" id="IPR002919">
    <property type="entry name" value="TIL_dom"/>
</dbReference>
<dbReference type="InterPro" id="IPR025615">
    <property type="entry name" value="TILa_dom"/>
</dbReference>
<dbReference type="InterPro" id="IPR014853">
    <property type="entry name" value="VWF/SSPO/ZAN-like_Cys-rich_dom"/>
</dbReference>
<dbReference type="InterPro" id="IPR001007">
    <property type="entry name" value="VWF_dom"/>
</dbReference>
<dbReference type="InterPro" id="IPR001846">
    <property type="entry name" value="VWF_type-D"/>
</dbReference>
<dbReference type="InterPro" id="IPR055355">
    <property type="entry name" value="ZP-C"/>
</dbReference>
<dbReference type="InterPro" id="IPR042235">
    <property type="entry name" value="ZP-C_dom"/>
</dbReference>
<dbReference type="InterPro" id="IPR001507">
    <property type="entry name" value="ZP_dom"/>
</dbReference>
<dbReference type="InterPro" id="IPR017977">
    <property type="entry name" value="ZP_dom_CS"/>
</dbReference>
<dbReference type="PANTHER" id="PTHR46160:SF3">
    <property type="entry name" value="ALPHA-TECTORIN"/>
    <property type="match status" value="1"/>
</dbReference>
<dbReference type="PANTHER" id="PTHR46160">
    <property type="entry name" value="ALPHA-TECTORIN-RELATED"/>
    <property type="match status" value="1"/>
</dbReference>
<dbReference type="Pfam" id="PF08742">
    <property type="entry name" value="C8"/>
    <property type="match status" value="4"/>
</dbReference>
<dbReference type="Pfam" id="PF06119">
    <property type="entry name" value="NIDO"/>
    <property type="match status" value="1"/>
</dbReference>
<dbReference type="Pfam" id="PF01826">
    <property type="entry name" value="TIL"/>
    <property type="match status" value="3"/>
</dbReference>
<dbReference type="Pfam" id="PF12714">
    <property type="entry name" value="TILa"/>
    <property type="match status" value="2"/>
</dbReference>
<dbReference type="Pfam" id="PF00094">
    <property type="entry name" value="VWD"/>
    <property type="match status" value="4"/>
</dbReference>
<dbReference type="Pfam" id="PF00100">
    <property type="entry name" value="Zona_pellucida"/>
    <property type="match status" value="1"/>
</dbReference>
<dbReference type="SMART" id="SM00832">
    <property type="entry name" value="C8"/>
    <property type="match status" value="4"/>
</dbReference>
<dbReference type="SMART" id="SM00181">
    <property type="entry name" value="EGF"/>
    <property type="match status" value="3"/>
</dbReference>
<dbReference type="SMART" id="SM00539">
    <property type="entry name" value="NIDO"/>
    <property type="match status" value="1"/>
</dbReference>
<dbReference type="SMART" id="SM00215">
    <property type="entry name" value="VWC_out"/>
    <property type="match status" value="3"/>
</dbReference>
<dbReference type="SMART" id="SM00216">
    <property type="entry name" value="VWD"/>
    <property type="match status" value="4"/>
</dbReference>
<dbReference type="SMART" id="SM00241">
    <property type="entry name" value="ZP"/>
    <property type="match status" value="1"/>
</dbReference>
<dbReference type="SUPFAM" id="SSF57567">
    <property type="entry name" value="Serine protease inhibitors"/>
    <property type="match status" value="3"/>
</dbReference>
<dbReference type="PROSITE" id="PS51220">
    <property type="entry name" value="NIDO"/>
    <property type="match status" value="1"/>
</dbReference>
<dbReference type="PROSITE" id="PS51233">
    <property type="entry name" value="VWFD"/>
    <property type="match status" value="4"/>
</dbReference>
<dbReference type="PROSITE" id="PS00682">
    <property type="entry name" value="ZP_1"/>
    <property type="match status" value="1"/>
</dbReference>
<dbReference type="PROSITE" id="PS51034">
    <property type="entry name" value="ZP_2"/>
    <property type="match status" value="1"/>
</dbReference>
<reference key="1">
    <citation type="journal article" date="1998" name="Nat. Genet.">
        <title>Mutations in the human alpha-tectorin gene cause autosomal dominant non-syndromic hearing impairment.</title>
        <authorList>
            <person name="Verhoeven K."/>
            <person name="Van Laer L."/>
            <person name="Kirschhofer K."/>
            <person name="Legan P.K."/>
            <person name="Hughes D.C."/>
            <person name="Schatteman I."/>
            <person name="Verstreken M."/>
            <person name="Van Hauwe P."/>
            <person name="Coucke P."/>
            <person name="Chen A."/>
            <person name="Smith R.J.H."/>
            <person name="Somers T."/>
            <person name="Offeciers F.E."/>
            <person name="Van de Heyning P."/>
            <person name="Richardson G.P."/>
            <person name="Wachtler F."/>
            <person name="Kimberling W.J."/>
            <person name="Willems P.J."/>
            <person name="Govaerts P.J."/>
            <person name="Van Camp G."/>
        </authorList>
    </citation>
    <scope>NUCLEOTIDE SEQUENCE [GENOMIC DNA]</scope>
    <scope>VARIANTS DFNA12 PHE-1820; ASP-1824 AND CYS-1870</scope>
    <scope>VARIANTS GLY-371; ALA-932 AND ASN-1724</scope>
</reference>
<reference key="2">
    <citation type="journal article" date="2006" name="Nature">
        <title>Human chromosome 11 DNA sequence and analysis including novel gene identification.</title>
        <authorList>
            <person name="Taylor T.D."/>
            <person name="Noguchi H."/>
            <person name="Totoki Y."/>
            <person name="Toyoda A."/>
            <person name="Kuroki Y."/>
            <person name="Dewar K."/>
            <person name="Lloyd C."/>
            <person name="Itoh T."/>
            <person name="Takeda T."/>
            <person name="Kim D.-W."/>
            <person name="She X."/>
            <person name="Barlow K.F."/>
            <person name="Bloom T."/>
            <person name="Bruford E."/>
            <person name="Chang J.L."/>
            <person name="Cuomo C.A."/>
            <person name="Eichler E."/>
            <person name="FitzGerald M.G."/>
            <person name="Jaffe D.B."/>
            <person name="LaButti K."/>
            <person name="Nicol R."/>
            <person name="Park H.-S."/>
            <person name="Seaman C."/>
            <person name="Sougnez C."/>
            <person name="Yang X."/>
            <person name="Zimmer A.R."/>
            <person name="Zody M.C."/>
            <person name="Birren B.W."/>
            <person name="Nusbaum C."/>
            <person name="Fujiyama A."/>
            <person name="Hattori M."/>
            <person name="Rogers J."/>
            <person name="Lander E.S."/>
            <person name="Sakaki Y."/>
        </authorList>
    </citation>
    <scope>NUCLEOTIDE SEQUENCE [LARGE SCALE GENOMIC DNA]</scope>
</reference>
<reference key="3">
    <citation type="journal article" date="2011" name="Proc. Natl. Acad. Sci. U.S.A.">
        <title>Carcinoembryonic antigen-related cell adhesion molecule 16 interacts with alpha-tectorin and is mutated in autosomal dominant hearing loss (DFNA4).</title>
        <authorList>
            <person name="Zheng J."/>
            <person name="Miller K.K."/>
            <person name="Yang T."/>
            <person name="Hildebrand M.S."/>
            <person name="Shearer A.E."/>
            <person name="DeLuca A.P."/>
            <person name="Scheetz T.E."/>
            <person name="Drummond J."/>
            <person name="Scherer S.E."/>
            <person name="Legan P.K."/>
            <person name="Goodyear R.J."/>
            <person name="Richardson G.P."/>
            <person name="Cheatham M.A."/>
            <person name="Smith R.J."/>
            <person name="Dallos P."/>
        </authorList>
    </citation>
    <scope>INTERACTION WITH CEACAM16</scope>
</reference>
<reference key="4">
    <citation type="journal article" date="1999" name="Eur. J. Hum. Genet.">
        <title>Mutation in the zonadhesin-like domain of alpha-tectorin associated with autosomal dominant non-syndromic hearing loss.</title>
        <authorList>
            <person name="Alloisio N."/>
            <person name="Morle L."/>
            <person name="Bozon M."/>
            <person name="Godet J."/>
            <person name="Verhoeven K."/>
            <person name="Van Camp G."/>
            <person name="Plauchu H."/>
            <person name="Muller P."/>
            <person name="Collet L."/>
            <person name="Lina-Granade G."/>
        </authorList>
    </citation>
    <scope>VARIANT DFNA12 SER-1619</scope>
</reference>
<reference key="5">
    <citation type="journal article" date="1999" name="Hum. Genet.">
        <title>Alpha-tectorin involvement in hearing disabilities: one gene -- two phenotypes.</title>
        <authorList>
            <person name="Balciuniene J."/>
            <person name="Dahl N."/>
            <person name="Jalonen P."/>
            <person name="Verhoeven K."/>
            <person name="Van Camp G."/>
            <person name="Borg E."/>
            <person name="Pettersson U."/>
            <person name="Jazin E.E."/>
        </authorList>
    </citation>
    <scope>VARIANT DFNA12 SER-1057</scope>
    <scope>VARIANTS GLY-371; ALA-932 AND THR-2100</scope>
</reference>
<reference key="6">
    <citation type="journal article" date="1999" name="Hum. Mol. Genet.">
        <title>An alpha-tectorin gene defect causes a newly identified autosomal recessive form of sensorineural pre-lingual non-syndromic deafness, DFNB21.</title>
        <authorList>
            <person name="Mustapha M."/>
            <person name="Weil D."/>
            <person name="Chardenoux S."/>
            <person name="Elias S."/>
            <person name="El-Zir E."/>
            <person name="Beckmann J.S."/>
            <person name="Loiselet J."/>
            <person name="Petit C."/>
        </authorList>
    </citation>
    <scope>INVOLVEMENT IN DFNB21</scope>
</reference>
<reference key="7">
    <citation type="journal article" date="2001" name="J. Med. Genet.">
        <title>A cysteine substitution in the zona pellucida domain of alpha-tectorin results in autosomal dominant, postlingual, progressive, mid frequency hearing loss in a Spanish family.</title>
        <authorList>
            <person name="Moreno-Pelayo M.A."/>
            <person name="del Castillo I."/>
            <person name="Villamar M."/>
            <person name="Romero L."/>
            <person name="Hernandez-Calvin F.J."/>
            <person name="Herraiz C."/>
            <person name="Barbera R."/>
            <person name="Navas C."/>
            <person name="Moreno F."/>
        </authorList>
    </citation>
    <scope>VARIANT GLY-1837</scope>
</reference>
<reference key="8">
    <citation type="journal article" date="2002" name="Arch. Otolaryngol. Head Neck Surg.">
        <title>Association of clinical features with mutation of TECTA in a family with autosomal dominant hearing loss.</title>
        <authorList>
            <person name="Iwasaki S."/>
            <person name="Harada D."/>
            <person name="Usami S."/>
            <person name="Nagura M."/>
            <person name="Takeshita T."/>
            <person name="Hoshino T."/>
        </authorList>
    </citation>
    <scope>VARIANT DFNA12 HIS-2021</scope>
</reference>
<reference key="9">
    <citation type="journal article" date="2003" name="J. Med. Genet.">
        <title>Distinctive audiometric profile associated with DFNB21 alleles of TECTA.</title>
        <authorList>
            <person name="Naz S."/>
            <person name="Alasti F."/>
            <person name="Mowjoodi A."/>
            <person name="Riazuddin S."/>
            <person name="Sanati M.H."/>
            <person name="Friedman T.B."/>
            <person name="Griffith A.J."/>
            <person name="Wilcox E.R."/>
            <person name="Riazuddin S."/>
        </authorList>
    </citation>
    <scope>INVOLVEMENT IN DFNB21</scope>
</reference>
<reference key="10">
    <citation type="journal article" date="2004" name="Cell. Physiol. Biochem.">
        <title>A genotype-phenotype correlation with gender-effect for hearing impairment caused by TECTA mutations.</title>
        <authorList>
            <person name="Pfister M."/>
            <person name="Thiele H."/>
            <person name="Van Camp G."/>
            <person name="Fransen E."/>
            <person name="Apaydin F."/>
            <person name="Aydin O."/>
            <person name="Leistenschneider P."/>
            <person name="Devoto M."/>
            <person name="Zenner H.P."/>
            <person name="Blin N."/>
            <person name="Nurnberg P."/>
            <person name="Ozkarakas H."/>
            <person name="Kupka S."/>
        </authorList>
    </citation>
    <scope>VARIANT DFNA12 GLY-1509</scope>
</reference>
<reference key="11">
    <citation type="journal article" date="2006" name="J. Assoc. Res. Otolaryngol.">
        <title>A novel TECTA mutation in a Dutch DFNA8/12 family confirms genotype-phenotype correlation.</title>
        <authorList>
            <person name="Plantinga R.F."/>
            <person name="de Brouwer A.P."/>
            <person name="Huygen P.L."/>
            <person name="Kunst H.P."/>
            <person name="Kremer H."/>
            <person name="Cremers C.W."/>
        </authorList>
    </citation>
    <scope>VARIANT DFNA12 CYS-1890</scope>
</reference>
<reference key="12">
    <citation type="journal article" date="2006" name="Science">
        <title>The consensus coding sequences of human breast and colorectal cancers.</title>
        <authorList>
            <person name="Sjoeblom T."/>
            <person name="Jones S."/>
            <person name="Wood L.D."/>
            <person name="Parsons D.W."/>
            <person name="Lin J."/>
            <person name="Barber T.D."/>
            <person name="Mandelker D."/>
            <person name="Leary R.J."/>
            <person name="Ptak J."/>
            <person name="Silliman N."/>
            <person name="Szabo S."/>
            <person name="Buckhaults P."/>
            <person name="Farrell C."/>
            <person name="Meeh P."/>
            <person name="Markowitz S.D."/>
            <person name="Willis J."/>
            <person name="Dawson D."/>
            <person name="Willson J.K.V."/>
            <person name="Gazdar A.F."/>
            <person name="Hartigan J."/>
            <person name="Wu L."/>
            <person name="Liu C."/>
            <person name="Parmigiani G."/>
            <person name="Park B.H."/>
            <person name="Bachman K.E."/>
            <person name="Papadopoulos N."/>
            <person name="Vogelstein B."/>
            <person name="Kinzler K.W."/>
            <person name="Velculescu V.E."/>
        </authorList>
    </citation>
    <scope>VARIANTS [LARGE SCALE ANALYSIS] HIS-284; ASN-771 AND THR-813</scope>
</reference>
<reference key="13">
    <citation type="journal article" date="2007" name="Clin. Genet.">
        <title>Audioprofiling identifies TECTA and GJB2-related deafness segregating in a single extended pedigree.</title>
        <authorList>
            <person name="Meyer N.C."/>
            <person name="Nishimura C.J."/>
            <person name="McMordie S."/>
            <person name="Smith R.J."/>
        </authorList>
    </citation>
    <scope>VARIANT DFNA12 ARG-1837</scope>
</reference>
<reference key="14">
    <citation type="journal article" date="2010" name="Ann. Clin. Lab. Sci.">
        <title>Two novel missense mutations in the TECTA gene in Korean families with autosomal dominant nonsyndromic hearing loss.</title>
        <authorList>
            <person name="Sagong B."/>
            <person name="Park R."/>
            <person name="Kim Y.H."/>
            <person name="Lee K.Y."/>
            <person name="Baek J.I."/>
            <person name="Cho H.J."/>
            <person name="Cho I.J."/>
            <person name="Kim U.K."/>
            <person name="Lee S.H."/>
        </authorList>
    </citation>
    <scope>VARIANTS DFNA12 GLU-317 AND MET-1866</scope>
</reference>
<reference key="15">
    <citation type="journal article" date="2011" name="Hum. Mutat.">
        <title>DFNA8/12 caused by TECTA mutations is the most identified subtype of nonsyndromic autosomal dominant hearing loss.</title>
        <authorList>
            <person name="Hildebrand M.S."/>
            <person name="Morin M."/>
            <person name="Meyer N.C."/>
            <person name="Mayo F."/>
            <person name="Modamio-Hoybjor S."/>
            <person name="Mencia A."/>
            <person name="Olavarrieta L."/>
            <person name="Morales-Angulo C."/>
            <person name="Nishimura C.J."/>
            <person name="Workman H."/>
            <person name="DeLuca A.P."/>
            <person name="del Castillo I."/>
            <person name="Taylor K.R."/>
            <person name="Tompkins B."/>
            <person name="Goodman C.W."/>
            <person name="Schrauwen I."/>
            <person name="Wesemael M.V."/>
            <person name="Lachlan K."/>
            <person name="Shearer A.E."/>
            <person name="Braun T.A."/>
            <person name="Huygen P.L."/>
            <person name="Kremer H."/>
            <person name="Van Camp G."/>
            <person name="Moreno F."/>
            <person name="Casavant T.L."/>
            <person name="Smith R.J."/>
            <person name="Moreno-Pelayo M.A."/>
        </authorList>
    </citation>
    <scope>VARIANTS DFNA12 ASN-197; SER-211; CYS-362; LYS-465; MET-562; MET-815; SER-886; TYR-1036; VAL-1098; HIS-1136; LEU-1248; ARG-1517; ARG-1791; GLY-1837; MET-1866; ARG-1867; CYS-1890; ARG-1898; CYS-1947 AND THR-2009</scope>
</reference>
<organism>
    <name type="scientific">Homo sapiens</name>
    <name type="common">Human</name>
    <dbReference type="NCBI Taxonomy" id="9606"/>
    <lineage>
        <taxon>Eukaryota</taxon>
        <taxon>Metazoa</taxon>
        <taxon>Chordata</taxon>
        <taxon>Craniata</taxon>
        <taxon>Vertebrata</taxon>
        <taxon>Euteleostomi</taxon>
        <taxon>Mammalia</taxon>
        <taxon>Eutheria</taxon>
        <taxon>Euarchontoglires</taxon>
        <taxon>Primates</taxon>
        <taxon>Haplorrhini</taxon>
        <taxon>Catarrhini</taxon>
        <taxon>Hominidae</taxon>
        <taxon>Homo</taxon>
    </lineage>
</organism>
<feature type="signal peptide" evidence="3">
    <location>
        <begin position="1"/>
        <end position="22"/>
    </location>
</feature>
<feature type="chain" id="PRO_0000041735" description="Alpha-tectorin">
    <location>
        <begin position="23"/>
        <end position="2091"/>
    </location>
</feature>
<feature type="propeptide" id="PRO_0000041736" description="Removed in mature form" evidence="3">
    <location>
        <begin position="2092"/>
        <end position="2155"/>
    </location>
</feature>
<feature type="domain" description="NIDO" evidence="5">
    <location>
        <begin position="98"/>
        <end position="252"/>
    </location>
</feature>
<feature type="domain" description="VWFC">
    <location>
        <begin position="260"/>
        <end position="314"/>
    </location>
</feature>
<feature type="domain" description="VWFD 1" evidence="6">
    <location>
        <begin position="320"/>
        <end position="500"/>
    </location>
</feature>
<feature type="domain" description="TIL 1">
    <location>
        <begin position="597"/>
        <end position="650"/>
    </location>
</feature>
<feature type="domain" description="VWFD 2" evidence="6">
    <location>
        <begin position="711"/>
        <end position="886"/>
    </location>
</feature>
<feature type="domain" description="TIL 2">
    <location>
        <begin position="984"/>
        <end position="1036"/>
    </location>
</feature>
<feature type="domain" description="VWFD 3" evidence="6">
    <location>
        <begin position="1098"/>
        <end position="1278"/>
    </location>
</feature>
<feature type="domain" description="TIL 3">
    <location>
        <begin position="1372"/>
        <end position="1425"/>
    </location>
</feature>
<feature type="domain" description="VWFD 4" evidence="6">
    <location>
        <begin position="1485"/>
        <end position="1666"/>
    </location>
</feature>
<feature type="domain" description="ZP" evidence="4">
    <location>
        <begin position="1805"/>
        <end position="2059"/>
    </location>
</feature>
<feature type="lipid moiety-binding region" description="GPI-anchor amidated asparagine" evidence="3">
    <location>
        <position position="2091"/>
    </location>
</feature>
<feature type="glycosylation site" description="N-linked (GlcNAc...) asparagine" evidence="3">
    <location>
        <position position="34"/>
    </location>
</feature>
<feature type="glycosylation site" description="N-linked (GlcNAc...) asparagine" evidence="3">
    <location>
        <position position="187"/>
    </location>
</feature>
<feature type="glycosylation site" description="N-linked (GlcNAc...) asparagine" evidence="3">
    <location>
        <position position="215"/>
    </location>
</feature>
<feature type="glycosylation site" description="N-linked (GlcNAc...) asparagine" evidence="3">
    <location>
        <position position="278"/>
    </location>
</feature>
<feature type="glycosylation site" description="N-linked (GlcNAc...) asparagine" evidence="3">
    <location>
        <position position="455"/>
    </location>
</feature>
<feature type="glycosylation site" description="N-linked (GlcNAc...) asparagine" evidence="3">
    <location>
        <position position="506"/>
    </location>
</feature>
<feature type="glycosylation site" description="N-linked (GlcNAc...) asparagine" evidence="3">
    <location>
        <position position="528"/>
    </location>
</feature>
<feature type="glycosylation site" description="N-linked (GlcNAc...) asparagine" evidence="3">
    <location>
        <position position="560"/>
    </location>
</feature>
<feature type="glycosylation site" description="N-linked (GlcNAc...) asparagine" evidence="3">
    <location>
        <position position="670"/>
    </location>
</feature>
<feature type="glycosylation site" description="N-linked (GlcNAc...) asparagine" evidence="3">
    <location>
        <position position="687"/>
    </location>
</feature>
<feature type="glycosylation site" description="N-linked (GlcNAc...) asparagine" evidence="3">
    <location>
        <position position="813"/>
    </location>
</feature>
<feature type="glycosylation site" description="N-linked (GlcNAc...) asparagine" evidence="3">
    <location>
        <position position="843"/>
    </location>
</feature>
<feature type="glycosylation site" description="N-linked (GlcNAc...) asparagine" evidence="3">
    <location>
        <position position="855"/>
    </location>
</feature>
<feature type="glycosylation site" description="N-linked (GlcNAc...) asparagine" evidence="3">
    <location>
        <position position="898"/>
    </location>
</feature>
<feature type="glycosylation site" description="N-linked (GlcNAc...) asparagine" evidence="3">
    <location>
        <position position="920"/>
    </location>
</feature>
<feature type="glycosylation site" description="N-linked (GlcNAc...) asparagine" evidence="3">
    <location>
        <position position="931"/>
    </location>
</feature>
<feature type="glycosylation site" description="N-linked (GlcNAc...) asparagine" evidence="3">
    <location>
        <position position="949"/>
    </location>
</feature>
<feature type="glycosylation site" description="N-linked (GlcNAc...) asparagine" evidence="3">
    <location>
        <position position="1048"/>
    </location>
</feature>
<feature type="glycosylation site" description="N-linked (GlcNAc...) asparagine" evidence="3">
    <location>
        <position position="1235"/>
    </location>
</feature>
<feature type="glycosylation site" description="N-linked (GlcNAc...) asparagine" evidence="3">
    <location>
        <position position="1364"/>
    </location>
</feature>
<feature type="glycosylation site" description="N-linked (GlcNAc...) asparagine" evidence="3">
    <location>
        <position position="1538"/>
    </location>
</feature>
<feature type="glycosylation site" description="N-linked (GlcNAc...) asparagine" evidence="3">
    <location>
        <position position="1565"/>
    </location>
</feature>
<feature type="glycosylation site" description="N-linked (GlcNAc...) asparagine" evidence="3">
    <location>
        <position position="1756"/>
    </location>
</feature>
<feature type="glycosylation site" description="N-linked (GlcNAc...) asparagine" evidence="3">
    <location>
        <position position="1772"/>
    </location>
</feature>
<feature type="glycosylation site" description="N-linked (GlcNAc...) asparagine" evidence="3">
    <location>
        <position position="1794"/>
    </location>
</feature>
<feature type="glycosylation site" description="N-linked (GlcNAc...) asparagine" evidence="3">
    <location>
        <position position="1851"/>
    </location>
</feature>
<feature type="glycosylation site" description="N-linked (GlcNAc...) asparagine" evidence="3">
    <location>
        <position position="1864"/>
    </location>
</feature>
<feature type="glycosylation site" description="N-linked (GlcNAc...) asparagine" evidence="3">
    <location>
        <position position="1880"/>
    </location>
</feature>
<feature type="glycosylation site" description="N-linked (GlcNAc...) asparagine" evidence="3">
    <location>
        <position position="1920"/>
    </location>
</feature>
<feature type="glycosylation site" description="N-linked (GlcNAc...) asparagine" evidence="3">
    <location>
        <position position="1939"/>
    </location>
</feature>
<feature type="disulfide bond" evidence="6">
    <location>
        <begin position="322"/>
        <end position="461"/>
    </location>
</feature>
<feature type="disulfide bond" evidence="6">
    <location>
        <begin position="344"/>
        <end position="499"/>
    </location>
</feature>
<feature type="disulfide bond" evidence="6">
    <location>
        <begin position="713"/>
        <end position="849"/>
    </location>
</feature>
<feature type="disulfide bond" evidence="6">
    <location>
        <begin position="1100"/>
        <end position="1241"/>
    </location>
</feature>
<feature type="disulfide bond" evidence="6">
    <location>
        <begin position="1122"/>
        <end position="1277"/>
    </location>
</feature>
<feature type="disulfide bond" evidence="6">
    <location>
        <begin position="1487"/>
        <end position="1622"/>
    </location>
</feature>
<feature type="disulfide bond" evidence="6">
    <location>
        <begin position="1509"/>
        <end position="1665"/>
    </location>
</feature>
<feature type="disulfide bond" evidence="2">
    <location>
        <begin position="1717"/>
        <end position="1775"/>
    </location>
</feature>
<feature type="disulfide bond" evidence="2">
    <location>
        <begin position="1741"/>
        <end position="1784"/>
    </location>
</feature>
<feature type="disulfide bond" evidence="2">
    <location>
        <begin position="1786"/>
        <end position="1818"/>
    </location>
</feature>
<feature type="disulfide bond" evidence="2">
    <location>
        <begin position="1806"/>
        <end position="1898"/>
    </location>
</feature>
<feature type="disulfide bond" evidence="2">
    <location>
        <begin position="1837"/>
        <end position="1857"/>
    </location>
</feature>
<feature type="disulfide bond" evidence="6">
    <location>
        <begin position="1980"/>
        <end position="2040"/>
    </location>
</feature>
<feature type="disulfide bond" evidence="2">
    <location>
        <begin position="2001"/>
        <end position="2056"/>
    </location>
</feature>
<feature type="disulfide bond" evidence="2">
    <location>
        <begin position="2045"/>
        <end position="2052"/>
    </location>
</feature>
<feature type="sequence variant" id="VAR_057500" description="In dbSNP:rs35507522.">
    <original>Q</original>
    <variation>R</variation>
    <location>
        <position position="19"/>
    </location>
</feature>
<feature type="sequence variant" id="VAR_066076" description="In DFNA12." evidence="18">
    <original>D</original>
    <variation>N</variation>
    <location>
        <position position="197"/>
    </location>
</feature>
<feature type="sequence variant" id="VAR_066077" description="In DFNA12." evidence="18">
    <original>F</original>
    <variation>S</variation>
    <location>
        <position position="211"/>
    </location>
</feature>
<feature type="sequence variant" id="VAR_036423" description="In a breast cancer sample; somatic mutation; dbSNP:rs886047837." evidence="14">
    <original>R</original>
    <variation>H</variation>
    <location>
        <position position="284"/>
    </location>
</feature>
<feature type="sequence variant" id="VAR_066078" description="In DFNA12." evidence="16">
    <original>V</original>
    <variation>E</variation>
    <location>
        <position position="317"/>
    </location>
</feature>
<feature type="sequence variant" id="VAR_066079" description="In DFNA12; dbSNP:rs779123206." evidence="18">
    <original>S</original>
    <variation>C</variation>
    <location>
        <position position="362"/>
    </location>
</feature>
<feature type="sequence variant" id="VAR_018968" description="In dbSNP:rs612969." evidence="8 19">
    <original>R</original>
    <variation>G</variation>
    <location>
        <position position="371"/>
    </location>
</feature>
<feature type="sequence variant" id="VAR_066080" description="In DFNA12." evidence="18">
    <original>N</original>
    <variation>K</variation>
    <location>
        <position position="465"/>
    </location>
</feature>
<feature type="sequence variant" id="VAR_066081" description="In DFNA12; dbSNP:rs779401654." evidence="18">
    <original>T</original>
    <variation>M</variation>
    <location>
        <position position="562"/>
    </location>
</feature>
<feature type="sequence variant" id="VAR_036424" description="In a breast cancer sample; somatic mutation." evidence="14">
    <original>I</original>
    <variation>N</variation>
    <location>
        <position position="771"/>
    </location>
</feature>
<feature type="sequence variant" id="VAR_036425" description="In a breast cancer sample; somatic mutation." evidence="14">
    <original>N</original>
    <variation>T</variation>
    <location>
        <position position="813"/>
    </location>
</feature>
<feature type="sequence variant" id="VAR_066082" description="In DFNA12; dbSNP:rs111759871." evidence="18">
    <original>T</original>
    <variation>M</variation>
    <location>
        <position position="815"/>
    </location>
</feature>
<feature type="sequence variant" id="VAR_066083" description="In DFNA12; dbSNP:rs146175803." evidence="18">
    <original>N</original>
    <variation>S</variation>
    <location>
        <position position="886"/>
    </location>
</feature>
<feature type="sequence variant" id="VAR_018969" description="In dbSNP:rs520805." evidence="8 19">
    <original>V</original>
    <variation>A</variation>
    <location>
        <position position="932"/>
    </location>
</feature>
<feature type="sequence variant" id="VAR_066084" description="In DFNA12; dbSNP:rs772606235." evidence="18">
    <original>C</original>
    <variation>Y</variation>
    <location>
        <position position="1036"/>
    </location>
</feature>
<feature type="sequence variant" id="VAR_018970" description="In DFNA12; progressive deafness with late onset; dbSNP:rs121909059." evidence="8">
    <original>C</original>
    <variation>S</variation>
    <location>
        <position position="1057"/>
    </location>
</feature>
<feature type="sequence variant" id="VAR_066085" description="In DFNA12; dbSNP:rs761524812." evidence="18">
    <original>A</original>
    <variation>V</variation>
    <location>
        <position position="1098"/>
    </location>
</feature>
<feature type="sequence variant" id="VAR_066086" description="In DFNA12; dbSNP:rs147890616." evidence="18">
    <original>D</original>
    <variation>H</variation>
    <location>
        <position position="1136"/>
    </location>
</feature>
<feature type="sequence variant" id="VAR_066087" description="In DFNA12; dbSNP:rs138768918." evidence="18">
    <original>P</original>
    <variation>L</variation>
    <location>
        <position position="1248"/>
    </location>
</feature>
<feature type="sequence variant" id="VAR_066088" description="In DFNA12." evidence="12">
    <original>C</original>
    <variation>G</variation>
    <location>
        <position position="1509"/>
    </location>
</feature>
<feature type="sequence variant" id="VAR_066089" description="In DFNA12." evidence="18">
    <original>C</original>
    <variation>R</variation>
    <location>
        <position position="1517"/>
    </location>
</feature>
<feature type="sequence variant" id="VAR_057501" description="In dbSNP:rs34963131.">
    <original>S</original>
    <variation>T</variation>
    <location>
        <position position="1584"/>
    </location>
</feature>
<feature type="sequence variant" id="VAR_018971" description="In DFNA12; dbSNP:rs121909060." evidence="7">
    <original>C</original>
    <variation>S</variation>
    <location>
        <position position="1619"/>
    </location>
</feature>
<feature type="sequence variant" id="VAR_018972" description="In dbSNP:rs526433." evidence="19">
    <original>S</original>
    <variation>N</variation>
    <location>
        <position position="1724"/>
    </location>
</feature>
<feature type="sequence variant" id="VAR_066090" description="In DFNA12; dbSNP:rs754213928." evidence="18">
    <original>P</original>
    <variation>R</variation>
    <location>
        <position position="1791"/>
    </location>
</feature>
<feature type="sequence variant" id="VAR_018973" description="In DFNA12; prelingual and stable deafness; dbSNP:rs281865415." evidence="19">
    <original>L</original>
    <variation>F</variation>
    <location>
        <position position="1820"/>
    </location>
</feature>
<feature type="sequence variant" id="VAR_018974" description="In DFNA12; prelingual and stable deafness; dbSNP:rs267607107." evidence="19">
    <original>G</original>
    <variation>D</variation>
    <location>
        <position position="1824"/>
    </location>
</feature>
<feature type="sequence variant" id="VAR_018975" description="In DFNA12; postlingual and progressive; dbSNP:rs121909061." evidence="9 18">
    <original>C</original>
    <variation>G</variation>
    <location>
        <position position="1837"/>
    </location>
</feature>
<feature type="sequence variant" id="VAR_066091" description="In DFNA12; dbSNP:rs121909061." evidence="15">
    <original>C</original>
    <variation>R</variation>
    <location>
        <position position="1837"/>
    </location>
</feature>
<feature type="sequence variant" id="VAR_066092" description="In DFNA12; dbSNP:rs140236996." evidence="16 18">
    <original>T</original>
    <variation>M</variation>
    <location>
        <position position="1866"/>
    </location>
</feature>
<feature type="sequence variant" id="VAR_066093" description="In DFNA12." evidence="18">
    <original>H</original>
    <variation>R</variation>
    <location>
        <position position="1867"/>
    </location>
</feature>
<feature type="sequence variant" id="VAR_018976" description="In DFNA12; prelingual and stable deafness; dbSNP:rs121909058." evidence="19">
    <original>Y</original>
    <variation>C</variation>
    <location>
        <position position="1870"/>
    </location>
</feature>
<feature type="sequence variant" id="VAR_059965" description="In dbSNP:rs202045605.">
    <original>S</original>
    <variation>R</variation>
    <location>
        <position position="1878"/>
    </location>
</feature>
<feature type="sequence variant" id="VAR_066094" description="In DFNA12; dbSNP:rs121909063." evidence="13 18">
    <original>R</original>
    <variation>C</variation>
    <location>
        <position position="1890"/>
    </location>
</feature>
<feature type="sequence variant" id="VAR_066095" description="In DFNA12." evidence="18">
    <original>C</original>
    <variation>R</variation>
    <location>
        <position position="1898"/>
    </location>
</feature>
<feature type="sequence variant" id="VAR_066096" description="In DFNA12; dbSNP:rs1428598791." evidence="18">
    <original>R</original>
    <variation>C</variation>
    <location>
        <position position="1947"/>
    </location>
</feature>
<feature type="sequence variant" id="VAR_066097" description="In DFNA12." evidence="18">
    <original>I</original>
    <variation>T</variation>
    <location>
        <position position="2009"/>
    </location>
</feature>
<feature type="sequence variant" id="VAR_018977" description="In DFNA12; prelingual and stable deafness; dbSNP:rs121909062." evidence="10">
    <original>R</original>
    <variation>H</variation>
    <location>
        <position position="2021"/>
    </location>
</feature>
<feature type="sequence variant" id="VAR_018978" evidence="8">
    <original>S</original>
    <variation>T</variation>
    <location>
        <position position="2100"/>
    </location>
</feature>
<keyword id="KW-1003">Cell membrane</keyword>
<keyword id="KW-0209">Deafness</keyword>
<keyword id="KW-0225">Disease variant</keyword>
<keyword id="KW-1015">Disulfide bond</keyword>
<keyword id="KW-0272">Extracellular matrix</keyword>
<keyword id="KW-0325">Glycoprotein</keyword>
<keyword id="KW-0336">GPI-anchor</keyword>
<keyword id="KW-1009">Hearing</keyword>
<keyword id="KW-0449">Lipoprotein</keyword>
<keyword id="KW-0472">Membrane</keyword>
<keyword id="KW-1010">Non-syndromic deafness</keyword>
<keyword id="KW-1185">Reference proteome</keyword>
<keyword id="KW-0677">Repeat</keyword>
<keyword id="KW-0964">Secreted</keyword>
<keyword id="KW-0732">Signal</keyword>
<proteinExistence type="evidence at protein level"/>
<comment type="function">
    <text evidence="1">One of the major non-collagenous components of the tectorial membrane (By similarity). The tectorial membrane is an extracellular matrix of the inner ear that covers the neuroepithelium of the cochlea and contacts the stereocilia bundles of specialized sensory hair cells. Sound induces movement of these hair cells relative to the tectorial membrane, deflects the stereocilia and leads to fluctuations in hair-cell membrane potential, transducing sound into electrical signals.</text>
</comment>
<comment type="subunit">
    <text evidence="17 21">May form homomeric filament after self-association or heteromeric filament after association with beta-tectorin (Probable). Interacts with CEACAM16.</text>
</comment>
<comment type="subcellular location">
    <subcellularLocation>
        <location evidence="21">Cell membrane</location>
        <topology evidence="21">Lipid-anchor</topology>
        <topology evidence="21">GPI-anchor</topology>
        <orientation evidence="21">Extracellular side</orientation>
    </subcellularLocation>
    <subcellularLocation>
        <location>Secreted</location>
        <location>Extracellular space</location>
        <location>Extracellular matrix</location>
    </subcellularLocation>
    <text evidence="1">Found in the non-collagenous matrix of the tectorial membrane.</text>
</comment>
<comment type="domain">
    <text>Zona pellucida domain may enable to form filaments.</text>
</comment>
<comment type="PTM">
    <text>The presence of a hydrophobic C-terminus preceded by a potential cleavage site strongly suggests that tectorins are synthesized as glycosylphosphatidylinositol-linked, membrane-bound precursors. Tectorins are targeted to the apical surface of the inner ear epithelia by the lipid and proteolytically released into the extracellular compartment.</text>
</comment>
<comment type="disease" evidence="11 20">
    <disease id="DI-00842">
        <name>Deafness, autosomal dominant, 12</name>
        <acronym>DFNA12</acronym>
        <description>A form of non-syndromic sensorineural hearing loss. Sensorineural deafness results from damage to the neural receptors of the inner ear, the nerve pathways to the brain, or the area of the brain that receives sound information.</description>
        <dbReference type="MIM" id="601543"/>
    </disease>
    <text>The disease is caused by variants affecting the gene represented in this entry.</text>
</comment>
<comment type="disease" evidence="11 20">
    <disease id="DI-00865">
        <name>Deafness, autosomal recessive, 21</name>
        <acronym>DFNB21</acronym>
        <description>A form of non-syndromic sensorineural hearing loss. Sensorineural deafness results from damage to the neural receptors of the inner ear, the nerve pathways to the brain, or the area of the brain that receives sound information.</description>
        <dbReference type="MIM" id="603629"/>
    </disease>
    <text>The disease is caused by variants affecting the gene represented in this entry.</text>
</comment>
<name>TECTA_HUMAN</name>
<sequence length="2155" mass="239527">MNYSSFLRIWVSFIFALVQHQAQPRELMYPFWQNDTKTPKVDDGSSSEIKLAIPVFFFGVPYRTVYVNNNGVVSFNVLVSQFTPESFPLTDGRAFVAPFWADVHNGIRGEIYYRETMEPAILKRATKDIRKYFKDMATFSATWVFIVTWEEVTFYGGSSTTPVNTFQAVLVSDGSYTFTLFNYYEINWTTGTASGGDPLTGLGGVMAQAGFNGGNLTNFFSLPGSRTPEIVNIQETTNVNVPGRWAFKVDGKEIDPANGCTSRGQFLRRGEVFWDDLNCTVKCRCLDFNNEIYCQEASCSPYEVCEPKGKFFYCSAVETSTCVVFGEPHYHTFDGFLFHFQGSCAYLLARQCLQTSSLPFFSVEAKNEHRRGSAVSWVKELSVEVNGYKILIPKGSYGRVKVNDLVTSLPVTLDLGTVKIYQSGISTAVETDFGLLVTFDGQHYASISVPGSYINSTCGLCGNYNKNPLDDFLRPDGRPAMSVLDLGESWRVYHADWKCDSGCVDNCTQCDAATEALYFGSDYCGFLNKTDGPLWECGTVVDPTAFVHSCVYDLCSVRDNGTLLCQAIQAYALVCQALGIPIGDWRTQTGCVSTVQCPSFSHYSVCTSSCPDTCSDLTASRNCATPCTEGCECNQGFVLSTSQCVPLHKCGCDFDGHYYTMGEFFWATANCTVQCLCEEGGDVYCFNKTCGSGEVCAVEDGYQGCFPKRETVCLLSQNQVLHTFDGASYAFPSEFSYTLLKTCPERPEYLEIDINKKKPDAGPAWLRGLRILVADQEVKIGGIGASEVKLNGQEVELPFFHPSGKLEIYRNKNSTTVESKGVVTVQYSDIGLLYIRLSTTYFNCTGGLCGFYNANASDEFCLPNGKCTDNLAVFLESWTTFEEICNGECGDLLKACNNDSELLKFYRSRSRCGIINDPSNSSFLECHGVVNVTAYYRTCLFRLCQSGGNESELCDSVARYASACKNADVEVGPWRTYDFCPLECPENSHFEECITCTETCETLTLGPICVDSCSEGCQCDEGYALLGSQCVTRSECGCNFEGHQLATNETFWVDLDCQIFCYCSGTDNRVHCETIPCKDDEYCMEEGGLYYCQARTDASCIVSGYGHYLTFDGFPFDFQTSCPLILCTTGSRPSSDSFPKFVVTAKNEDRDPSLALWVKQVDVTVFGYSIVIHRAYKHTVLVNSERLYLPLKLGQGKINIFSFGFHVVVETDFGLKVVYDWKTFLSITVPRSMQNSTYGLCGRYNGNPDDDLEMPMGLLASSVNEFGQSWVKRDTFCQVGCGDRCPSCAKVEGFSKVQQLCSLIPNQNAAFSKCHSKVNPTFFYKNCLFDSCIDGGAVQTACSWLQNYASTCQTQGITVTGWRNYTSCTVTCPPNSHYESCVSVCQPRCAAIRLKSDCSHYCVEGCHCDAGYVLNGKSCILPHSCGCYSDGKYYEPKQLFWNSDCTRRCRCFRRNVIQCDPRQCKSDEECALRNGVRGCFSTKTSYCLAAGGGVFRTFDGAFLRFPANCAFVLSTICQKLPDISFQLIINFDKWSAPNLTIISPVYFYINEEQILINDRNTVKVNGTQVNVPFITGLATKIYSSEGFLVIDTSPDIQIYYNGFNVIKISISERLQNKVCGLCGNFNGDLTDDYVTLRGKPVVSSVVLAQSWKTNGMQKRPLAPSCNELQFSQYAAMCDNVHIQKMQGDGYCLKLTDMKGFFQPCYGLLDPLPFYESCYLDGCYSHKKFQLCGSLAAYGEACRSFGILSTEWIEKENCSGVVEDPCVGADCPNRTCELGNGRELCGCIEPPPYGNNSHDIIDAEVTCKAAQMEVSISKCKLFQLGFEREGVRINDRQCTGIEGEDFISFQINNTKGNCGNIVQSNGTHIMYKNTLWIESANNTGNIITRDRTINVEFSCAYELDIKISLDSVVKPMLSVINLTVPTQEGSFITKMALYKNASYKHPYRQGEVVLTTRDVLYVGVFVVGADATHLILTLNKCYATPTRDSNDKLRYFIIEGGCQNLKDNTIGIEENAVSLTCRFHVTVFKFIGDYDEVHLHCAVSLCDSEKYSCKITCPHNSRIATDYTKEPKEQIISVGPIRRKRLDWCEDNGGCEQICTSRVDGPLCSCVTGTLQEDGKSCRASNSSMELQVWTLLLIMIQISLWHFVYKSGTTS</sequence>
<gene>
    <name type="primary">TECTA</name>
</gene>
<protein>
    <recommendedName>
        <fullName>Alpha-tectorin</fullName>
    </recommendedName>
</protein>
<accession>O75443</accession>
<evidence type="ECO:0000250" key="1"/>
<evidence type="ECO:0000250" key="2">
    <source>
        <dbReference type="UniProtKB" id="P07911"/>
    </source>
</evidence>
<evidence type="ECO:0000255" key="3"/>
<evidence type="ECO:0000255" key="4">
    <source>
        <dbReference type="PROSITE-ProRule" id="PRU00375"/>
    </source>
</evidence>
<evidence type="ECO:0000255" key="5">
    <source>
        <dbReference type="PROSITE-ProRule" id="PRU00570"/>
    </source>
</evidence>
<evidence type="ECO:0000255" key="6">
    <source>
        <dbReference type="PROSITE-ProRule" id="PRU00580"/>
    </source>
</evidence>
<evidence type="ECO:0000269" key="7">
    <source>
    </source>
</evidence>
<evidence type="ECO:0000269" key="8">
    <source>
    </source>
</evidence>
<evidence type="ECO:0000269" key="9">
    <source>
    </source>
</evidence>
<evidence type="ECO:0000269" key="10">
    <source>
    </source>
</evidence>
<evidence type="ECO:0000269" key="11">
    <source>
    </source>
</evidence>
<evidence type="ECO:0000269" key="12">
    <source>
    </source>
</evidence>
<evidence type="ECO:0000269" key="13">
    <source>
    </source>
</evidence>
<evidence type="ECO:0000269" key="14">
    <source>
    </source>
</evidence>
<evidence type="ECO:0000269" key="15">
    <source>
    </source>
</evidence>
<evidence type="ECO:0000269" key="16">
    <source>
    </source>
</evidence>
<evidence type="ECO:0000269" key="17">
    <source>
    </source>
</evidence>
<evidence type="ECO:0000269" key="18">
    <source>
    </source>
</evidence>
<evidence type="ECO:0000269" key="19">
    <source>
    </source>
</evidence>
<evidence type="ECO:0000269" key="20">
    <source>
    </source>
</evidence>
<evidence type="ECO:0000305" key="21"/>